<proteinExistence type="evidence at protein level"/>
<name>RSAM_PSESP</name>
<gene>
    <name evidence="5" type="primary">ramA</name>
</gene>
<protein>
    <recommendedName>
        <fullName evidence="3 5">(R)-stereoselective amidase</fullName>
        <ecNumber evidence="2">3.5.1.100</ecNumber>
    </recommendedName>
</protein>
<organism>
    <name type="scientific">Pseudomonas sp</name>
    <dbReference type="NCBI Taxonomy" id="306"/>
    <lineage>
        <taxon>Bacteria</taxon>
        <taxon>Pseudomonadati</taxon>
        <taxon>Pseudomonadota</taxon>
        <taxon>Gammaproteobacteria</taxon>
        <taxon>Pseudomonadales</taxon>
        <taxon>Pseudomonadaceae</taxon>
        <taxon>Pseudomonas</taxon>
    </lineage>
</organism>
<feature type="chain" id="PRO_0000400092" description="(R)-stereoselective amidase">
    <location>
        <begin position="1"/>
        <end position="274"/>
    </location>
</feature>
<feature type="domain" description="CN hydrolase" evidence="1">
    <location>
        <begin position="1"/>
        <end position="234"/>
    </location>
</feature>
<feature type="active site" description="Proton acceptor" evidence="1">
    <location>
        <position position="40"/>
    </location>
</feature>
<feature type="active site" description="Proton donor" evidence="1">
    <location>
        <position position="108"/>
    </location>
</feature>
<feature type="active site" description="Nucleophile" evidence="1">
    <location>
        <position position="140"/>
    </location>
</feature>
<feature type="sequence conflict" description="In Ref. 1; AA sequence." evidence="4" ref="1">
    <original>K</original>
    <variation>A</variation>
    <location>
        <position position="2"/>
    </location>
</feature>
<evidence type="ECO:0000255" key="1">
    <source>
        <dbReference type="PROSITE-ProRule" id="PRU00054"/>
    </source>
</evidence>
<evidence type="ECO:0000269" key="2">
    <source>
    </source>
</evidence>
<evidence type="ECO:0000303" key="3">
    <source>
    </source>
</evidence>
<evidence type="ECO:0000305" key="4"/>
<evidence type="ECO:0000312" key="5">
    <source>
        <dbReference type="EMBL" id="BAD15093.1"/>
    </source>
</evidence>
<evidence type="ECO:0000312" key="6">
    <source>
        <dbReference type="EMBL" id="BAE02667.1"/>
    </source>
</evidence>
<keyword id="KW-0903">Direct protein sequencing</keyword>
<keyword id="KW-0378">Hydrolase</keyword>
<accession>Q75SP7</accession>
<dbReference type="EC" id="3.5.1.100" evidence="2"/>
<dbReference type="EMBL" id="AB154368">
    <property type="protein sequence ID" value="BAD15093.1"/>
    <property type="molecule type" value="Genomic_DNA"/>
</dbReference>
<dbReference type="EMBL" id="AB158573">
    <property type="protein sequence ID" value="BAE02667.1"/>
    <property type="molecule type" value="Genomic_DNA"/>
</dbReference>
<dbReference type="SMR" id="Q75SP7"/>
<dbReference type="KEGG" id="ag:BAD15093"/>
<dbReference type="BioCyc" id="MetaCyc:MONOMER-15017"/>
<dbReference type="BRENDA" id="3.5.1.100">
    <property type="organism ID" value="5085"/>
</dbReference>
<dbReference type="GO" id="GO:0016787">
    <property type="term" value="F:hydrolase activity"/>
    <property type="evidence" value="ECO:0007669"/>
    <property type="project" value="UniProtKB-KW"/>
</dbReference>
<dbReference type="CDD" id="cd07576">
    <property type="entry name" value="R-amidase_like"/>
    <property type="match status" value="1"/>
</dbReference>
<dbReference type="Gene3D" id="3.60.110.10">
    <property type="entry name" value="Carbon-nitrogen hydrolase"/>
    <property type="match status" value="1"/>
</dbReference>
<dbReference type="InterPro" id="IPR003010">
    <property type="entry name" value="C-N_Hydrolase"/>
</dbReference>
<dbReference type="InterPro" id="IPR036526">
    <property type="entry name" value="C-N_Hydrolase_sf"/>
</dbReference>
<dbReference type="InterPro" id="IPR044083">
    <property type="entry name" value="RamA-like"/>
</dbReference>
<dbReference type="PANTHER" id="PTHR23088:SF27">
    <property type="entry name" value="DEAMINATED GLUTATHIONE AMIDASE"/>
    <property type="match status" value="1"/>
</dbReference>
<dbReference type="PANTHER" id="PTHR23088">
    <property type="entry name" value="NITRILASE-RELATED"/>
    <property type="match status" value="1"/>
</dbReference>
<dbReference type="Pfam" id="PF00795">
    <property type="entry name" value="CN_hydrolase"/>
    <property type="match status" value="1"/>
</dbReference>
<dbReference type="SUPFAM" id="SSF56317">
    <property type="entry name" value="Carbon-nitrogen hydrolase"/>
    <property type="match status" value="1"/>
</dbReference>
<dbReference type="PROSITE" id="PS50263">
    <property type="entry name" value="CN_HYDROLASE"/>
    <property type="match status" value="1"/>
</dbReference>
<comment type="function">
    <text evidence="2">Hydrolyzes (R)-piperazine-2-carboxamide and (R)-piperazine-2-tert-butylcarboxamide with strict R-stereoselectivity. Also active towards beta-alaninamide, piperidine-3-carboxmide, D-glutaminamide and slightly active towards L-glutaminamide and piperidine-4-carboxamide.</text>
</comment>
<comment type="catalytic activity">
    <reaction evidence="2">
        <text>(R)-piperazine-2-carboxamide + H2O = (R)-piperazine-2-carboxylate + NH4(+)</text>
        <dbReference type="Rhea" id="RHEA:26542"/>
        <dbReference type="ChEBI" id="CHEBI:15377"/>
        <dbReference type="ChEBI" id="CHEBI:28938"/>
        <dbReference type="ChEBI" id="CHEBI:58916"/>
        <dbReference type="ChEBI" id="CHEBI:58917"/>
        <dbReference type="EC" id="3.5.1.100"/>
    </reaction>
</comment>
<comment type="catalytic activity">
    <reaction evidence="2">
        <text>beta-alaninamide + H2O = beta-alanine + NH4(+)</text>
        <dbReference type="Rhea" id="RHEA:26546"/>
        <dbReference type="ChEBI" id="CHEBI:15377"/>
        <dbReference type="ChEBI" id="CHEBI:28938"/>
        <dbReference type="ChEBI" id="CHEBI:57966"/>
        <dbReference type="ChEBI" id="CHEBI:58918"/>
        <dbReference type="EC" id="3.5.1.100"/>
    </reaction>
</comment>
<comment type="activity regulation">
    <text evidence="2">Completely inhibited by p-chloromercuribenzoate, N-ethylmaleimide, MnSO(4), MnCl(2), CoCl(2), NiCl(2), CuSO(4), CuCl(2), ZnSO(4), ZnCl(2), AgNO(3), CdCl(2), HgCl(2) and PbCl(2). Partially inhibited by FeCl(3) and Fe(NH(4))(2)(SO(4))(2). Slightly enhanced by dithiothreitol. Unaffected by LiBr, H(2)BO(3), NaCl, MgSO(4), MgCl(2), AlCl(3), KCl, CaCl(2), CrCl(3), RbCl, Na(2)MoO(4), (NH(4))(6)Mo(7)O(24), CsCl and BaCl(2). Unaffected by the chelating agents o-phenanthroline, 8-hydroxyquinoline, enthylenediaminetetraacetic acid and alpha,alpha'-dipyridyl. Not inhibited by the carbonyl reagents hydroxylamine, phenylhydrazine, hydrazine, D,L-penicillamine and D-cycloserine. Not affected by the serine protease inhibitor phenylmethanesulfonyl fluoride, the serine/cysteine protease inhibitor leupeptine or the aspartic protease inhibitor pepstatin.</text>
</comment>
<comment type="biophysicochemical properties">
    <phDependence>
        <text evidence="2">Optimum pH is 8.0. Stable from pH 6.0 to 9.0.</text>
    </phDependence>
    <temperatureDependence>
        <text evidence="2">Optimum temperature is 45 degrees Celsius, activity decreases rapidly above 45 degrees Celsius possibly due to instability at higher temperatures. Inactivated following 10 minutes incubation at 55 degrees Celsius, and only retains 2.6% of activity after 10 minutes incubation at 50 degrees Celsius.</text>
    </temperatureDependence>
</comment>
<comment type="subunit">
    <text evidence="2">Monomer.</text>
</comment>
<reference evidence="4 5" key="1">
    <citation type="journal article" date="2004" name="Eur. J. Biochem.">
        <title>A novel R-stereoselective amidase from Pseudomonas sp. MCI3434 acting on piperazine-2-tert-butylcarboxamide.</title>
        <authorList>
            <person name="Komeda H."/>
            <person name="Harada H."/>
            <person name="Washika S."/>
            <person name="Sakamoto T."/>
            <person name="Ueda M."/>
            <person name="Asano Y."/>
        </authorList>
    </citation>
    <scope>NUCLEOTIDE SEQUENCE [GENOMIC DNA]</scope>
    <scope>PROTEIN SEQUENCE OF 1-14</scope>
    <scope>FUNCTION</scope>
    <scope>CATALYTIC ACTIVITY</scope>
    <scope>ACTIVITY REGULATION</scope>
    <scope>BIOPHYSICOCHEMICAL PROPERTIES</scope>
    <scope>SUBUNIT</scope>
    <source>
        <strain evidence="5">MCI3434</strain>
    </source>
</reference>
<reference evidence="6" key="2">
    <citation type="journal article" date="2005" name="FEBS J.">
        <title>A DmpA-homologous protein from Pseudomonas sp. is a dipeptidase specific for beta-alanyl dipeptides.</title>
        <authorList>
            <person name="Komeda H."/>
            <person name="Asano Y."/>
        </authorList>
    </citation>
    <scope>NUCLEOTIDE SEQUENCE [GENOMIC DNA]</scope>
    <source>
        <strain evidence="6">MCI3434</strain>
    </source>
</reference>
<sequence length="274" mass="30128">MKIELVQLAGRDGDTAYNLSRTLNAIATCAGDTDLLVFPETYLSGFVGGAQLAQVAEPLHGTTLQTLLQAVRQRDVAVVLGFAEVHQGRFYNSSVLVTPEGIALQYRKTHLWPSERSDFSPGDRFTTVLWRGVRVGLLICYDIELPETSRALAQLGAEVVIVTNGNMDPYGPVHRTAIMARAQENQLFAVMVNRVGAGDDGLVFAGGSMAVDPFGRVLFEAGRDEVRHVVELDLDQLKAARRDYDYLKDRRLMLSGEQTEHPDGRRELLIGASQ</sequence>